<comment type="function">
    <text evidence="1">NAD-dependent protein deacetylase which modulates the activities of several enzymes which are inactive in their acetylated form.</text>
</comment>
<comment type="catalytic activity">
    <reaction evidence="1">
        <text>N(6)-acetyl-L-lysyl-[protein] + NAD(+) + H2O = 2''-O-acetyl-ADP-D-ribose + nicotinamide + L-lysyl-[protein]</text>
        <dbReference type="Rhea" id="RHEA:43636"/>
        <dbReference type="Rhea" id="RHEA-COMP:9752"/>
        <dbReference type="Rhea" id="RHEA-COMP:10731"/>
        <dbReference type="ChEBI" id="CHEBI:15377"/>
        <dbReference type="ChEBI" id="CHEBI:17154"/>
        <dbReference type="ChEBI" id="CHEBI:29969"/>
        <dbReference type="ChEBI" id="CHEBI:57540"/>
        <dbReference type="ChEBI" id="CHEBI:61930"/>
        <dbReference type="ChEBI" id="CHEBI:83767"/>
        <dbReference type="EC" id="2.3.1.286"/>
    </reaction>
</comment>
<comment type="cofactor">
    <cofactor evidence="1">
        <name>Zn(2+)</name>
        <dbReference type="ChEBI" id="CHEBI:29105"/>
    </cofactor>
    <text evidence="1">Binds 1 zinc ion per subunit.</text>
</comment>
<comment type="subcellular location">
    <subcellularLocation>
        <location evidence="1">Cytoplasm</location>
    </subcellularLocation>
</comment>
<comment type="similarity">
    <text evidence="1">Belongs to the sirtuin family. Class U subfamily.</text>
</comment>
<proteinExistence type="inferred from homology"/>
<sequence>MFFMDSKNLFKKAAELIKSSQKTMVLTGAGISTESGIPDFRSPGTGLWENMDPTEVLSTKVLFNSPEEFYRVGFKILSSMRNAEPNEAHYILSEMEKEGIIAGVITQNIDNLHQKAGSKKVYEVHGNTREGSCLRCGEKVSFELLEEKVAKEEIPPRCDRCGGMLRPDVVLFGDPMPHAFDLALKEVQESDLLIVIGSSLVVAPVNFLPGMVDGLIIINATETPYDYKADVVIREKASYALRNIWNLIKS</sequence>
<keyword id="KW-0963">Cytoplasm</keyword>
<keyword id="KW-0479">Metal-binding</keyword>
<keyword id="KW-0520">NAD</keyword>
<keyword id="KW-1185">Reference proteome</keyword>
<keyword id="KW-0808">Transferase</keyword>
<keyword id="KW-0862">Zinc</keyword>
<accession>Q8R984</accession>
<dbReference type="EC" id="2.3.1.286" evidence="1 2"/>
<dbReference type="EMBL" id="AE008691">
    <property type="protein sequence ID" value="AAM24934.1"/>
    <property type="molecule type" value="Genomic_DNA"/>
</dbReference>
<dbReference type="SMR" id="Q8R984"/>
<dbReference type="STRING" id="273068.TTE1740"/>
<dbReference type="KEGG" id="tte:TTE1740"/>
<dbReference type="eggNOG" id="COG0846">
    <property type="taxonomic scope" value="Bacteria"/>
</dbReference>
<dbReference type="HOGENOM" id="CLU_023643_3_0_9"/>
<dbReference type="Proteomes" id="UP000000555">
    <property type="component" value="Chromosome"/>
</dbReference>
<dbReference type="GO" id="GO:0005737">
    <property type="term" value="C:cytoplasm"/>
    <property type="evidence" value="ECO:0007669"/>
    <property type="project" value="UniProtKB-SubCell"/>
</dbReference>
<dbReference type="GO" id="GO:0017136">
    <property type="term" value="F:histone deacetylase activity, NAD-dependent"/>
    <property type="evidence" value="ECO:0007669"/>
    <property type="project" value="TreeGrafter"/>
</dbReference>
<dbReference type="GO" id="GO:0070403">
    <property type="term" value="F:NAD+ binding"/>
    <property type="evidence" value="ECO:0007669"/>
    <property type="project" value="UniProtKB-UniRule"/>
</dbReference>
<dbReference type="GO" id="GO:0008270">
    <property type="term" value="F:zinc ion binding"/>
    <property type="evidence" value="ECO:0007669"/>
    <property type="project" value="UniProtKB-UniRule"/>
</dbReference>
<dbReference type="CDD" id="cd01413">
    <property type="entry name" value="SIR2_Af2"/>
    <property type="match status" value="1"/>
</dbReference>
<dbReference type="Gene3D" id="3.30.1600.10">
    <property type="entry name" value="SIR2/SIRT2 'Small Domain"/>
    <property type="match status" value="1"/>
</dbReference>
<dbReference type="Gene3D" id="3.40.50.1220">
    <property type="entry name" value="TPP-binding domain"/>
    <property type="match status" value="1"/>
</dbReference>
<dbReference type="HAMAP" id="MF_01968">
    <property type="entry name" value="Sirtuin_ClassU"/>
    <property type="match status" value="1"/>
</dbReference>
<dbReference type="InterPro" id="IPR029035">
    <property type="entry name" value="DHS-like_NAD/FAD-binding_dom"/>
</dbReference>
<dbReference type="InterPro" id="IPR050134">
    <property type="entry name" value="NAD-dep_sirtuin_deacylases"/>
</dbReference>
<dbReference type="InterPro" id="IPR003000">
    <property type="entry name" value="Sirtuin"/>
</dbReference>
<dbReference type="InterPro" id="IPR026591">
    <property type="entry name" value="Sirtuin_cat_small_dom_sf"/>
</dbReference>
<dbReference type="InterPro" id="IPR028628">
    <property type="entry name" value="Sirtuin_class_U"/>
</dbReference>
<dbReference type="InterPro" id="IPR026590">
    <property type="entry name" value="Ssirtuin_cat_dom"/>
</dbReference>
<dbReference type="NCBIfam" id="NF001753">
    <property type="entry name" value="PRK00481.1-3"/>
    <property type="match status" value="1"/>
</dbReference>
<dbReference type="PANTHER" id="PTHR11085">
    <property type="entry name" value="NAD-DEPENDENT PROTEIN DEACYLASE SIRTUIN-5, MITOCHONDRIAL-RELATED"/>
    <property type="match status" value="1"/>
</dbReference>
<dbReference type="PANTHER" id="PTHR11085:SF10">
    <property type="entry name" value="NAD-DEPENDENT PROTEIN DEACYLASE SIRTUIN-5, MITOCHONDRIAL-RELATED"/>
    <property type="match status" value="1"/>
</dbReference>
<dbReference type="Pfam" id="PF02146">
    <property type="entry name" value="SIR2"/>
    <property type="match status" value="1"/>
</dbReference>
<dbReference type="SUPFAM" id="SSF52467">
    <property type="entry name" value="DHS-like NAD/FAD-binding domain"/>
    <property type="match status" value="1"/>
</dbReference>
<dbReference type="PROSITE" id="PS50305">
    <property type="entry name" value="SIRTUIN"/>
    <property type="match status" value="1"/>
</dbReference>
<evidence type="ECO:0000255" key="1">
    <source>
        <dbReference type="HAMAP-Rule" id="MF_01968"/>
    </source>
</evidence>
<evidence type="ECO:0000255" key="2">
    <source>
        <dbReference type="PROSITE-ProRule" id="PRU00236"/>
    </source>
</evidence>
<protein>
    <recommendedName>
        <fullName evidence="1">NAD-dependent protein deacetylase 2</fullName>
        <ecNumber evidence="1 2">2.3.1.286</ecNumber>
    </recommendedName>
    <alternativeName>
        <fullName evidence="1">Regulatory protein SIR2 homolog 2</fullName>
    </alternativeName>
</protein>
<gene>
    <name evidence="1" type="primary">cobB2</name>
    <name type="ordered locus">TTE1740</name>
</gene>
<feature type="chain" id="PRO_0000110366" description="NAD-dependent protein deacetylase 2">
    <location>
        <begin position="1"/>
        <end position="250"/>
    </location>
</feature>
<feature type="domain" description="Deacetylase sirtuin-type" evidence="2">
    <location>
        <begin position="4"/>
        <end position="250"/>
    </location>
</feature>
<feature type="active site" description="Proton acceptor" evidence="2">
    <location>
        <position position="125"/>
    </location>
</feature>
<feature type="binding site" evidence="1">
    <location>
        <position position="29"/>
    </location>
    <ligand>
        <name>NAD(+)</name>
        <dbReference type="ChEBI" id="CHEBI:57540"/>
    </ligand>
</feature>
<feature type="binding site" evidence="1">
    <location>
        <position position="33"/>
    </location>
    <ligand>
        <name>NAD(+)</name>
        <dbReference type="ChEBI" id="CHEBI:57540"/>
    </ligand>
</feature>
<feature type="binding site" evidence="1">
    <location>
        <position position="40"/>
    </location>
    <ligand>
        <name>NAD(+)</name>
        <dbReference type="ChEBI" id="CHEBI:57540"/>
    </ligand>
</feature>
<feature type="binding site" evidence="1">
    <location>
        <position position="40"/>
    </location>
    <ligand>
        <name>nicotinamide</name>
        <dbReference type="ChEBI" id="CHEBI:17154"/>
    </ligand>
</feature>
<feature type="binding site" evidence="1">
    <location>
        <position position="41"/>
    </location>
    <ligand>
        <name>NAD(+)</name>
        <dbReference type="ChEBI" id="CHEBI:57540"/>
    </ligand>
</feature>
<feature type="binding site" evidence="1">
    <location>
        <position position="107"/>
    </location>
    <ligand>
        <name>NAD(+)</name>
        <dbReference type="ChEBI" id="CHEBI:57540"/>
    </ligand>
</feature>
<feature type="binding site" evidence="1">
    <location>
        <position position="109"/>
    </location>
    <ligand>
        <name>NAD(+)</name>
        <dbReference type="ChEBI" id="CHEBI:57540"/>
    </ligand>
</feature>
<feature type="binding site" evidence="1">
    <location>
        <position position="109"/>
    </location>
    <ligand>
        <name>nicotinamide</name>
        <dbReference type="ChEBI" id="CHEBI:17154"/>
    </ligand>
</feature>
<feature type="binding site" evidence="1">
    <location>
        <position position="110"/>
    </location>
    <ligand>
        <name>NAD(+)</name>
        <dbReference type="ChEBI" id="CHEBI:57540"/>
    </ligand>
</feature>
<feature type="binding site" evidence="1">
    <location>
        <position position="110"/>
    </location>
    <ligand>
        <name>nicotinamide</name>
        <dbReference type="ChEBI" id="CHEBI:17154"/>
    </ligand>
</feature>
<feature type="binding site" evidence="1">
    <location>
        <position position="125"/>
    </location>
    <ligand>
        <name>NAD(+)</name>
        <dbReference type="ChEBI" id="CHEBI:57540"/>
    </ligand>
</feature>
<feature type="binding site" evidence="1">
    <location>
        <position position="133"/>
    </location>
    <ligand>
        <name>Zn(2+)</name>
        <dbReference type="ChEBI" id="CHEBI:29105"/>
    </ligand>
</feature>
<feature type="binding site" evidence="1">
    <location>
        <position position="136"/>
    </location>
    <ligand>
        <name>Zn(2+)</name>
        <dbReference type="ChEBI" id="CHEBI:29105"/>
    </ligand>
</feature>
<feature type="binding site" evidence="1">
    <location>
        <position position="158"/>
    </location>
    <ligand>
        <name>Zn(2+)</name>
        <dbReference type="ChEBI" id="CHEBI:29105"/>
    </ligand>
</feature>
<feature type="binding site" evidence="1">
    <location>
        <position position="161"/>
    </location>
    <ligand>
        <name>Zn(2+)</name>
        <dbReference type="ChEBI" id="CHEBI:29105"/>
    </ligand>
</feature>
<feature type="binding site" evidence="1">
    <location>
        <position position="198"/>
    </location>
    <ligand>
        <name>NAD(+)</name>
        <dbReference type="ChEBI" id="CHEBI:57540"/>
    </ligand>
</feature>
<feature type="binding site" evidence="1">
    <location>
        <position position="199"/>
    </location>
    <ligand>
        <name>NAD(+)</name>
        <dbReference type="ChEBI" id="CHEBI:57540"/>
    </ligand>
</feature>
<feature type="binding site" evidence="1">
    <location>
        <position position="219"/>
    </location>
    <ligand>
        <name>NAD(+)</name>
        <dbReference type="ChEBI" id="CHEBI:57540"/>
    </ligand>
</feature>
<reference key="1">
    <citation type="journal article" date="2002" name="Genome Res.">
        <title>A complete sequence of the T. tengcongensis genome.</title>
        <authorList>
            <person name="Bao Q."/>
            <person name="Tian Y."/>
            <person name="Li W."/>
            <person name="Xu Z."/>
            <person name="Xuan Z."/>
            <person name="Hu S."/>
            <person name="Dong W."/>
            <person name="Yang J."/>
            <person name="Chen Y."/>
            <person name="Xue Y."/>
            <person name="Xu Y."/>
            <person name="Lai X."/>
            <person name="Huang L."/>
            <person name="Dong X."/>
            <person name="Ma Y."/>
            <person name="Ling L."/>
            <person name="Tan H."/>
            <person name="Chen R."/>
            <person name="Wang J."/>
            <person name="Yu J."/>
            <person name="Yang H."/>
        </authorList>
    </citation>
    <scope>NUCLEOTIDE SEQUENCE [LARGE SCALE GENOMIC DNA]</scope>
    <source>
        <strain>DSM 15242 / JCM 11007 / NBRC 100824 / MB4</strain>
    </source>
</reference>
<organism>
    <name type="scientific">Caldanaerobacter subterraneus subsp. tengcongensis (strain DSM 15242 / JCM 11007 / NBRC 100824 / MB4)</name>
    <name type="common">Thermoanaerobacter tengcongensis</name>
    <dbReference type="NCBI Taxonomy" id="273068"/>
    <lineage>
        <taxon>Bacteria</taxon>
        <taxon>Bacillati</taxon>
        <taxon>Bacillota</taxon>
        <taxon>Clostridia</taxon>
        <taxon>Thermoanaerobacterales</taxon>
        <taxon>Thermoanaerobacteraceae</taxon>
        <taxon>Caldanaerobacter</taxon>
    </lineage>
</organism>
<name>NPD2_CALS4</name>